<protein>
    <recommendedName>
        <fullName evidence="1">Putative AgrB-like protein</fullName>
        <ecNumber evidence="1">3.4.-.-</ecNumber>
    </recommendedName>
</protein>
<gene>
    <name type="ordered locus">BH3475</name>
</gene>
<keyword id="KW-1003">Cell membrane</keyword>
<keyword id="KW-0378">Hydrolase</keyword>
<keyword id="KW-0472">Membrane</keyword>
<keyword id="KW-0645">Protease</keyword>
<keyword id="KW-0673">Quorum sensing</keyword>
<keyword id="KW-1185">Reference proteome</keyword>
<keyword id="KW-0812">Transmembrane</keyword>
<keyword id="KW-1133">Transmembrane helix</keyword>
<name>AGRB_HALH5</name>
<dbReference type="EC" id="3.4.-.-" evidence="1"/>
<dbReference type="EMBL" id="BA000004">
    <property type="protein sequence ID" value="BAB07194.1"/>
    <property type="molecule type" value="Genomic_DNA"/>
</dbReference>
<dbReference type="PIR" id="C84084">
    <property type="entry name" value="C84084"/>
</dbReference>
<dbReference type="RefSeq" id="WP_010899608.1">
    <property type="nucleotide sequence ID" value="NC_002570.2"/>
</dbReference>
<dbReference type="STRING" id="272558.gene:10729388"/>
<dbReference type="KEGG" id="bha:BH3475"/>
<dbReference type="eggNOG" id="COG4512">
    <property type="taxonomic scope" value="Bacteria"/>
</dbReference>
<dbReference type="HOGENOM" id="CLU_119880_0_0_9"/>
<dbReference type="OrthoDB" id="2884540at2"/>
<dbReference type="Proteomes" id="UP000001258">
    <property type="component" value="Chromosome"/>
</dbReference>
<dbReference type="GO" id="GO:0005886">
    <property type="term" value="C:plasma membrane"/>
    <property type="evidence" value="ECO:0007669"/>
    <property type="project" value="UniProtKB-SubCell"/>
</dbReference>
<dbReference type="GO" id="GO:0008233">
    <property type="term" value="F:peptidase activity"/>
    <property type="evidence" value="ECO:0007669"/>
    <property type="project" value="UniProtKB-UniRule"/>
</dbReference>
<dbReference type="GO" id="GO:0006508">
    <property type="term" value="P:proteolysis"/>
    <property type="evidence" value="ECO:0007669"/>
    <property type="project" value="UniProtKB-KW"/>
</dbReference>
<dbReference type="GO" id="GO:0009372">
    <property type="term" value="P:quorum sensing"/>
    <property type="evidence" value="ECO:0007669"/>
    <property type="project" value="UniProtKB-UniRule"/>
</dbReference>
<dbReference type="HAMAP" id="MF_00784">
    <property type="entry name" value="AgrB"/>
    <property type="match status" value="1"/>
</dbReference>
<dbReference type="InterPro" id="IPR006741">
    <property type="entry name" value="AgrB"/>
</dbReference>
<dbReference type="Pfam" id="PF04647">
    <property type="entry name" value="AgrB"/>
    <property type="match status" value="1"/>
</dbReference>
<dbReference type="SMART" id="SM00793">
    <property type="entry name" value="AgrB"/>
    <property type="match status" value="1"/>
</dbReference>
<accession>Q9K794</accession>
<comment type="function">
    <text evidence="1">May be involved in the proteolytic processing of a quorum sensing system signal molecule precursor.</text>
</comment>
<comment type="subcellular location">
    <subcellularLocation>
        <location evidence="1">Cell membrane</location>
        <topology evidence="1">Multi-pass membrane protein</topology>
    </subcellularLocation>
</comment>
<comment type="similarity">
    <text evidence="1">Belongs to the AgrB family.</text>
</comment>
<proteinExistence type="inferred from homology"/>
<sequence>MLERLALTLAHQVKALNAEETESVEVLTFGFTIILHYLFTLLLVLAVGLLHGEIWLFLQIALSFTFMRVLTGGAHLDHSIGCTLLSVLFITAISWVPFANNYAWILYGISGGLLIWKYAPYYEAHQVVHTEHWERRKKRIAYILIVLFIILAMLMSTQGLVLGVLLQGVLLTPIGLKVTRQLNRFILKGGETNEENS</sequence>
<reference key="1">
    <citation type="journal article" date="2000" name="Nucleic Acids Res.">
        <title>Complete genome sequence of the alkaliphilic bacterium Bacillus halodurans and genomic sequence comparison with Bacillus subtilis.</title>
        <authorList>
            <person name="Takami H."/>
            <person name="Nakasone K."/>
            <person name="Takaki Y."/>
            <person name="Maeno G."/>
            <person name="Sasaki R."/>
            <person name="Masui N."/>
            <person name="Fuji F."/>
            <person name="Hirama C."/>
            <person name="Nakamura Y."/>
            <person name="Ogasawara N."/>
            <person name="Kuhara S."/>
            <person name="Horikoshi K."/>
        </authorList>
    </citation>
    <scope>NUCLEOTIDE SEQUENCE [LARGE SCALE GENOMIC DNA]</scope>
    <source>
        <strain>ATCC BAA-125 / DSM 18197 / FERM 7344 / JCM 9153 / C-125</strain>
    </source>
</reference>
<evidence type="ECO:0000255" key="1">
    <source>
        <dbReference type="HAMAP-Rule" id="MF_00784"/>
    </source>
</evidence>
<organism>
    <name type="scientific">Halalkalibacterium halodurans (strain ATCC BAA-125 / DSM 18197 / FERM 7344 / JCM 9153 / C-125)</name>
    <name type="common">Bacillus halodurans</name>
    <dbReference type="NCBI Taxonomy" id="272558"/>
    <lineage>
        <taxon>Bacteria</taxon>
        <taxon>Bacillati</taxon>
        <taxon>Bacillota</taxon>
        <taxon>Bacilli</taxon>
        <taxon>Bacillales</taxon>
        <taxon>Bacillaceae</taxon>
        <taxon>Halalkalibacterium (ex Joshi et al. 2022)</taxon>
    </lineage>
</organism>
<feature type="chain" id="PRO_0000168134" description="Putative AgrB-like protein">
    <location>
        <begin position="1"/>
        <end position="197"/>
    </location>
</feature>
<feature type="transmembrane region" description="Helical" evidence="1">
    <location>
        <begin position="29"/>
        <end position="49"/>
    </location>
</feature>
<feature type="transmembrane region" description="Helical" evidence="1">
    <location>
        <begin position="79"/>
        <end position="99"/>
    </location>
</feature>
<feature type="transmembrane region" description="Helical" evidence="1">
    <location>
        <begin position="102"/>
        <end position="122"/>
    </location>
</feature>
<feature type="transmembrane region" description="Helical" evidence="1">
    <location>
        <begin position="143"/>
        <end position="163"/>
    </location>
</feature>